<accession>A4TRU9</accession>
<evidence type="ECO:0000255" key="1">
    <source>
        <dbReference type="HAMAP-Rule" id="MF_01632"/>
    </source>
</evidence>
<dbReference type="EC" id="4.1.3.40" evidence="1"/>
<dbReference type="EMBL" id="CP000668">
    <property type="protein sequence ID" value="ABP42011.1"/>
    <property type="molecule type" value="Genomic_DNA"/>
</dbReference>
<dbReference type="RefSeq" id="WP_002209087.1">
    <property type="nucleotide sequence ID" value="NZ_CP009715.1"/>
</dbReference>
<dbReference type="SMR" id="A4TRU9"/>
<dbReference type="GeneID" id="57974294"/>
<dbReference type="KEGG" id="ypp:YPDSF_3661"/>
<dbReference type="PATRIC" id="fig|386656.14.peg.323"/>
<dbReference type="UniPathway" id="UPA00232"/>
<dbReference type="GO" id="GO:0005829">
    <property type="term" value="C:cytosol"/>
    <property type="evidence" value="ECO:0007669"/>
    <property type="project" value="TreeGrafter"/>
</dbReference>
<dbReference type="GO" id="GO:0008813">
    <property type="term" value="F:chorismate lyase activity"/>
    <property type="evidence" value="ECO:0007669"/>
    <property type="project" value="UniProtKB-UniRule"/>
</dbReference>
<dbReference type="GO" id="GO:0042866">
    <property type="term" value="P:pyruvate biosynthetic process"/>
    <property type="evidence" value="ECO:0007669"/>
    <property type="project" value="UniProtKB-UniRule"/>
</dbReference>
<dbReference type="GO" id="GO:0006744">
    <property type="term" value="P:ubiquinone biosynthetic process"/>
    <property type="evidence" value="ECO:0007669"/>
    <property type="project" value="UniProtKB-UniRule"/>
</dbReference>
<dbReference type="Gene3D" id="3.40.1410.10">
    <property type="entry name" value="Chorismate lyase-like"/>
    <property type="match status" value="1"/>
</dbReference>
<dbReference type="HAMAP" id="MF_01632">
    <property type="entry name" value="UbiC"/>
    <property type="match status" value="1"/>
</dbReference>
<dbReference type="InterPro" id="IPR007440">
    <property type="entry name" value="Chorismate--pyruvate_lyase"/>
</dbReference>
<dbReference type="InterPro" id="IPR028978">
    <property type="entry name" value="Chorismate_lyase_/UTRA_dom_sf"/>
</dbReference>
<dbReference type="NCBIfam" id="NF008656">
    <property type="entry name" value="PRK11655.1"/>
    <property type="match status" value="1"/>
</dbReference>
<dbReference type="PANTHER" id="PTHR38683">
    <property type="entry name" value="CHORISMATE PYRUVATE-LYASE"/>
    <property type="match status" value="1"/>
</dbReference>
<dbReference type="PANTHER" id="PTHR38683:SF1">
    <property type="entry name" value="CHORISMATE PYRUVATE-LYASE"/>
    <property type="match status" value="1"/>
</dbReference>
<dbReference type="Pfam" id="PF04345">
    <property type="entry name" value="Chor_lyase"/>
    <property type="match status" value="1"/>
</dbReference>
<dbReference type="SUPFAM" id="SSF64288">
    <property type="entry name" value="Chorismate lyase-like"/>
    <property type="match status" value="1"/>
</dbReference>
<keyword id="KW-0963">Cytoplasm</keyword>
<keyword id="KW-0456">Lyase</keyword>
<keyword id="KW-0670">Pyruvate</keyword>
<keyword id="KW-0831">Ubiquinone biosynthesis</keyword>
<proteinExistence type="inferred from homology"/>
<organism>
    <name type="scientific">Yersinia pestis (strain Pestoides F)</name>
    <dbReference type="NCBI Taxonomy" id="386656"/>
    <lineage>
        <taxon>Bacteria</taxon>
        <taxon>Pseudomonadati</taxon>
        <taxon>Pseudomonadota</taxon>
        <taxon>Gammaproteobacteria</taxon>
        <taxon>Enterobacterales</taxon>
        <taxon>Yersiniaceae</taxon>
        <taxon>Yersinia</taxon>
    </lineage>
</organism>
<reference key="1">
    <citation type="submission" date="2007-02" db="EMBL/GenBank/DDBJ databases">
        <title>Complete sequence of chromosome of Yersinia pestis Pestoides F.</title>
        <authorList>
            <consortium name="US DOE Joint Genome Institute"/>
            <person name="Copeland A."/>
            <person name="Lucas S."/>
            <person name="Lapidus A."/>
            <person name="Barry K."/>
            <person name="Detter J.C."/>
            <person name="Glavina del Rio T."/>
            <person name="Hammon N."/>
            <person name="Israni S."/>
            <person name="Dalin E."/>
            <person name="Tice H."/>
            <person name="Pitluck S."/>
            <person name="Di Bartolo G."/>
            <person name="Chain P."/>
            <person name="Malfatti S."/>
            <person name="Shin M."/>
            <person name="Vergez L."/>
            <person name="Schmutz J."/>
            <person name="Larimer F."/>
            <person name="Land M."/>
            <person name="Hauser L."/>
            <person name="Worsham P."/>
            <person name="Chu M."/>
            <person name="Bearden S."/>
            <person name="Garcia E."/>
            <person name="Richardson P."/>
        </authorList>
    </citation>
    <scope>NUCLEOTIDE SEQUENCE [LARGE SCALE GENOMIC DNA]</scope>
    <source>
        <strain>Pestoides F</strain>
    </source>
</reference>
<feature type="chain" id="PRO_1000069749" description="Chorismate pyruvate-lyase">
    <location>
        <begin position="1"/>
        <end position="174"/>
    </location>
</feature>
<feature type="binding site" evidence="1">
    <location>
        <position position="36"/>
    </location>
    <ligand>
        <name>substrate</name>
    </ligand>
</feature>
<feature type="binding site" evidence="1">
    <location>
        <position position="78"/>
    </location>
    <ligand>
        <name>substrate</name>
    </ligand>
</feature>
<feature type="binding site" evidence="1">
    <location>
        <position position="116"/>
    </location>
    <ligand>
        <name>substrate</name>
    </ligand>
</feature>
<feature type="binding site" evidence="1">
    <location>
        <position position="157"/>
    </location>
    <ligand>
        <name>substrate</name>
    </ligand>
</feature>
<name>UBIC_YERPP</name>
<sequence>MFIGDASILKPIQWCATEHPELPADIADWLMELGSMTRRFEQHCQRVHVEPQRECFITRDALGEEAEHLPVSQRYWLREIVLFGDNVPWLLGRTVIPEETLSGPDRALVDLGTLPLGRYLFSGDALTRDYIHVGRQDNLWARRSLLRLSGNPLLLTEVFLPASPLYTHCDSIPK</sequence>
<gene>
    <name evidence="1" type="primary">ubiC</name>
    <name type="ordered locus">YPDSF_3661</name>
</gene>
<protein>
    <recommendedName>
        <fullName evidence="1">Chorismate pyruvate-lyase</fullName>
        <shortName evidence="1">CL</shortName>
        <shortName evidence="1">CPL</shortName>
        <ecNumber evidence="1">4.1.3.40</ecNumber>
    </recommendedName>
</protein>
<comment type="function">
    <text evidence="1">Removes the pyruvyl group from chorismate, with concomitant aromatization of the ring, to provide 4-hydroxybenzoate (4HB) for the ubiquinone pathway.</text>
</comment>
<comment type="catalytic activity">
    <reaction evidence="1">
        <text>chorismate = 4-hydroxybenzoate + pyruvate</text>
        <dbReference type="Rhea" id="RHEA:16505"/>
        <dbReference type="ChEBI" id="CHEBI:15361"/>
        <dbReference type="ChEBI" id="CHEBI:17879"/>
        <dbReference type="ChEBI" id="CHEBI:29748"/>
        <dbReference type="EC" id="4.1.3.40"/>
    </reaction>
</comment>
<comment type="pathway">
    <text evidence="1">Cofactor biosynthesis; ubiquinone biosynthesis.</text>
</comment>
<comment type="subunit">
    <text evidence="1">Monomer.</text>
</comment>
<comment type="subcellular location">
    <subcellularLocation>
        <location evidence="1">Cytoplasm</location>
    </subcellularLocation>
</comment>
<comment type="similarity">
    <text evidence="1">Belongs to the UbiC family.</text>
</comment>